<name>KGUA_BUCAP</name>
<gene>
    <name evidence="1" type="primary">gmk</name>
    <name type="ordered locus">BUsg_419</name>
</gene>
<organism>
    <name type="scientific">Buchnera aphidicola subsp. Schizaphis graminum (strain Sg)</name>
    <dbReference type="NCBI Taxonomy" id="198804"/>
    <lineage>
        <taxon>Bacteria</taxon>
        <taxon>Pseudomonadati</taxon>
        <taxon>Pseudomonadota</taxon>
        <taxon>Gammaproteobacteria</taxon>
        <taxon>Enterobacterales</taxon>
        <taxon>Erwiniaceae</taxon>
        <taxon>Buchnera</taxon>
    </lineage>
</organism>
<feature type="chain" id="PRO_0000170511" description="Guanylate kinase">
    <location>
        <begin position="1"/>
        <end position="207"/>
    </location>
</feature>
<feature type="domain" description="Guanylate kinase-like" evidence="1">
    <location>
        <begin position="4"/>
        <end position="184"/>
    </location>
</feature>
<feature type="binding site" evidence="1">
    <location>
        <begin position="11"/>
        <end position="18"/>
    </location>
    <ligand>
        <name>ATP</name>
        <dbReference type="ChEBI" id="CHEBI:30616"/>
    </ligand>
</feature>
<sequence>MSQGILFIISAPSGTGKSSLIEGLLKTKFLYNIQVSISHTTRVMRPGESHGKHYYFISKKEFRIMIKQESFLEYAKVFNNYYGTSRQSIEKMLLSGIDVFLDIDWQGANQIRYKMPNSKSIFLLPPSKDELYKRLRERGQDSDTVISKRMEKAVDEMNHYSEYDYLIINDDFQKAINDLRTIIIAEHLCLFHQKNKHNVLISQLLKS</sequence>
<evidence type="ECO:0000255" key="1">
    <source>
        <dbReference type="HAMAP-Rule" id="MF_00328"/>
    </source>
</evidence>
<keyword id="KW-0067">ATP-binding</keyword>
<keyword id="KW-0963">Cytoplasm</keyword>
<keyword id="KW-0418">Kinase</keyword>
<keyword id="KW-0547">Nucleotide-binding</keyword>
<keyword id="KW-0808">Transferase</keyword>
<dbReference type="EC" id="2.7.4.8" evidence="1"/>
<dbReference type="EMBL" id="AE013218">
    <property type="protein sequence ID" value="AAM67964.1"/>
    <property type="molecule type" value="Genomic_DNA"/>
</dbReference>
<dbReference type="RefSeq" id="WP_011053931.1">
    <property type="nucleotide sequence ID" value="NC_004061.1"/>
</dbReference>
<dbReference type="SMR" id="Q8K9C7"/>
<dbReference type="STRING" id="198804.BUsg_419"/>
<dbReference type="GeneID" id="93003891"/>
<dbReference type="KEGG" id="bas:BUsg_419"/>
<dbReference type="eggNOG" id="COG0194">
    <property type="taxonomic scope" value="Bacteria"/>
</dbReference>
<dbReference type="HOGENOM" id="CLU_001715_1_0_6"/>
<dbReference type="Proteomes" id="UP000000416">
    <property type="component" value="Chromosome"/>
</dbReference>
<dbReference type="GO" id="GO:0005829">
    <property type="term" value="C:cytosol"/>
    <property type="evidence" value="ECO:0007669"/>
    <property type="project" value="TreeGrafter"/>
</dbReference>
<dbReference type="GO" id="GO:0005524">
    <property type="term" value="F:ATP binding"/>
    <property type="evidence" value="ECO:0007669"/>
    <property type="project" value="UniProtKB-UniRule"/>
</dbReference>
<dbReference type="GO" id="GO:0004385">
    <property type="term" value="F:guanylate kinase activity"/>
    <property type="evidence" value="ECO:0007669"/>
    <property type="project" value="UniProtKB-UniRule"/>
</dbReference>
<dbReference type="CDD" id="cd00071">
    <property type="entry name" value="GMPK"/>
    <property type="match status" value="1"/>
</dbReference>
<dbReference type="FunFam" id="3.40.50.300:FF:000084">
    <property type="entry name" value="Guanylate kinase"/>
    <property type="match status" value="1"/>
</dbReference>
<dbReference type="FunFam" id="3.30.63.10:FF:000002">
    <property type="entry name" value="Guanylate kinase 1"/>
    <property type="match status" value="1"/>
</dbReference>
<dbReference type="Gene3D" id="3.30.63.10">
    <property type="entry name" value="Guanylate Kinase phosphate binding domain"/>
    <property type="match status" value="1"/>
</dbReference>
<dbReference type="Gene3D" id="3.40.50.300">
    <property type="entry name" value="P-loop containing nucleotide triphosphate hydrolases"/>
    <property type="match status" value="1"/>
</dbReference>
<dbReference type="HAMAP" id="MF_00328">
    <property type="entry name" value="Guanylate_kinase"/>
    <property type="match status" value="1"/>
</dbReference>
<dbReference type="InterPro" id="IPR008145">
    <property type="entry name" value="GK/Ca_channel_bsu"/>
</dbReference>
<dbReference type="InterPro" id="IPR008144">
    <property type="entry name" value="Guanylate_kin-like_dom"/>
</dbReference>
<dbReference type="InterPro" id="IPR017665">
    <property type="entry name" value="Guanylate_kinase"/>
</dbReference>
<dbReference type="InterPro" id="IPR020590">
    <property type="entry name" value="Guanylate_kinase_CS"/>
</dbReference>
<dbReference type="InterPro" id="IPR027417">
    <property type="entry name" value="P-loop_NTPase"/>
</dbReference>
<dbReference type="NCBIfam" id="TIGR03263">
    <property type="entry name" value="guanyl_kin"/>
    <property type="match status" value="1"/>
</dbReference>
<dbReference type="PANTHER" id="PTHR23117:SF13">
    <property type="entry name" value="GUANYLATE KINASE"/>
    <property type="match status" value="1"/>
</dbReference>
<dbReference type="PANTHER" id="PTHR23117">
    <property type="entry name" value="GUANYLATE KINASE-RELATED"/>
    <property type="match status" value="1"/>
</dbReference>
<dbReference type="Pfam" id="PF00625">
    <property type="entry name" value="Guanylate_kin"/>
    <property type="match status" value="1"/>
</dbReference>
<dbReference type="SMART" id="SM00072">
    <property type="entry name" value="GuKc"/>
    <property type="match status" value="1"/>
</dbReference>
<dbReference type="SUPFAM" id="SSF52540">
    <property type="entry name" value="P-loop containing nucleoside triphosphate hydrolases"/>
    <property type="match status" value="1"/>
</dbReference>
<dbReference type="PROSITE" id="PS00856">
    <property type="entry name" value="GUANYLATE_KINASE_1"/>
    <property type="match status" value="1"/>
</dbReference>
<dbReference type="PROSITE" id="PS50052">
    <property type="entry name" value="GUANYLATE_KINASE_2"/>
    <property type="match status" value="1"/>
</dbReference>
<proteinExistence type="inferred from homology"/>
<accession>Q8K9C7</accession>
<protein>
    <recommendedName>
        <fullName evidence="1">Guanylate kinase</fullName>
        <ecNumber evidence="1">2.7.4.8</ecNumber>
    </recommendedName>
    <alternativeName>
        <fullName evidence="1">GMP kinase</fullName>
    </alternativeName>
</protein>
<comment type="function">
    <text evidence="1">Essential for recycling GMP and indirectly, cGMP.</text>
</comment>
<comment type="catalytic activity">
    <reaction evidence="1">
        <text>GMP + ATP = GDP + ADP</text>
        <dbReference type="Rhea" id="RHEA:20780"/>
        <dbReference type="ChEBI" id="CHEBI:30616"/>
        <dbReference type="ChEBI" id="CHEBI:58115"/>
        <dbReference type="ChEBI" id="CHEBI:58189"/>
        <dbReference type="ChEBI" id="CHEBI:456216"/>
        <dbReference type="EC" id="2.7.4.8"/>
    </reaction>
</comment>
<comment type="subcellular location">
    <subcellularLocation>
        <location evidence="1">Cytoplasm</location>
    </subcellularLocation>
</comment>
<comment type="similarity">
    <text evidence="1">Belongs to the guanylate kinase family.</text>
</comment>
<reference key="1">
    <citation type="journal article" date="2002" name="Science">
        <title>50 million years of genomic stasis in endosymbiotic bacteria.</title>
        <authorList>
            <person name="Tamas I."/>
            <person name="Klasson L."/>
            <person name="Canbaeck B."/>
            <person name="Naeslund A.K."/>
            <person name="Eriksson A.-S."/>
            <person name="Wernegreen J.J."/>
            <person name="Sandstroem J.P."/>
            <person name="Moran N.A."/>
            <person name="Andersson S.G.E."/>
        </authorList>
    </citation>
    <scope>NUCLEOTIDE SEQUENCE [LARGE SCALE GENOMIC DNA]</scope>
    <source>
        <strain>Sg</strain>
    </source>
</reference>